<dbReference type="EC" id="4.2.1.-" evidence="5"/>
<dbReference type="EMBL" id="GL698613">
    <property type="protein sequence ID" value="EFY84643.1"/>
    <property type="molecule type" value="Genomic_DNA"/>
</dbReference>
<dbReference type="RefSeq" id="XP_007815648.1">
    <property type="nucleotide sequence ID" value="XM_007817457.1"/>
</dbReference>
<dbReference type="SMR" id="E9EHG0"/>
<dbReference type="STRING" id="655827.E9EHG0"/>
<dbReference type="eggNOG" id="KOG1211">
    <property type="taxonomic scope" value="Eukaryota"/>
</dbReference>
<dbReference type="HOGENOM" id="CLU_614049_0_0_1"/>
<dbReference type="InParanoid" id="E9EHG0"/>
<dbReference type="OrthoDB" id="5281072at2759"/>
<dbReference type="Proteomes" id="UP000002499">
    <property type="component" value="Unassembled WGS sequence"/>
</dbReference>
<dbReference type="GO" id="GO:0016829">
    <property type="term" value="F:lyase activity"/>
    <property type="evidence" value="ECO:0007669"/>
    <property type="project" value="UniProtKB-KW"/>
</dbReference>
<dbReference type="Gene3D" id="3.10.450.50">
    <property type="match status" value="1"/>
</dbReference>
<dbReference type="Gene3D" id="3.90.1300.10">
    <property type="entry name" value="Amidase signature (AS) domain"/>
    <property type="match status" value="1"/>
</dbReference>
<dbReference type="InterPro" id="IPR023631">
    <property type="entry name" value="Amidase_dom"/>
</dbReference>
<dbReference type="InterPro" id="IPR036928">
    <property type="entry name" value="AS_sf"/>
</dbReference>
<dbReference type="InterPro" id="IPR032710">
    <property type="entry name" value="NTF2-like_dom_sf"/>
</dbReference>
<dbReference type="InterPro" id="IPR049884">
    <property type="entry name" value="Scytalone_dh"/>
</dbReference>
<dbReference type="PANTHER" id="PTHR46310">
    <property type="entry name" value="AMIDASE 1"/>
    <property type="match status" value="1"/>
</dbReference>
<dbReference type="PANTHER" id="PTHR46310:SF7">
    <property type="entry name" value="AMIDASE 1"/>
    <property type="match status" value="1"/>
</dbReference>
<dbReference type="Pfam" id="PF01425">
    <property type="entry name" value="Amidase"/>
    <property type="match status" value="1"/>
</dbReference>
<dbReference type="Pfam" id="PF02982">
    <property type="entry name" value="Scytalone_dh"/>
    <property type="match status" value="1"/>
</dbReference>
<dbReference type="SUPFAM" id="SSF75304">
    <property type="entry name" value="Amidase signature (AS) enzymes"/>
    <property type="match status" value="1"/>
</dbReference>
<dbReference type="SUPFAM" id="SSF54427">
    <property type="entry name" value="NTF2-like"/>
    <property type="match status" value="1"/>
</dbReference>
<proteinExistence type="inferred from homology"/>
<gene>
    <name evidence="3" type="primary">Arp1</name>
    <name type="ORF">MAC_09308</name>
</gene>
<organism>
    <name type="scientific">Metarhizium acridum (strain CQMa 102)</name>
    <dbReference type="NCBI Taxonomy" id="655827"/>
    <lineage>
        <taxon>Eukaryota</taxon>
        <taxon>Fungi</taxon>
        <taxon>Dikarya</taxon>
        <taxon>Ascomycota</taxon>
        <taxon>Pezizomycotina</taxon>
        <taxon>Sordariomycetes</taxon>
        <taxon>Hypocreomycetidae</taxon>
        <taxon>Hypocreales</taxon>
        <taxon>Clavicipitaceae</taxon>
        <taxon>Metarhizium</taxon>
    </lineage>
</organism>
<sequence>MQNLTDKGAIIFGVQKTSQFANGETATADWVDYHSPFNPRGDGYQDPATSSAGAGSSIASYEWLDLAAGSDTGGSIRGPAAVQGIFGNRPSHGLISLDNAMPLSPKLDTPGFLARDPYLWNAANAALYRENPLSRWSWGDSQPSSILSRNKTLFMNWFNENILPRSSDPLTCSSGLLLHVDGSAGFISRNGYINPPVPPFGFSNGQISVFAETPDSVFPLGQVPAFSSITNHTEYLPVTINVVAAKGCDVLIAKLAEDMVAAGILKVLKIGAGIEGGEILMRRYFVRDDGDEVMSRITSRGRLLFQDWDRLRGILAPTLYVDYTKIGKGKWEAMSADDFMAMVSNDDFLGDLCVKTQHLIGATSWERVSESKVVGHHQLRAAHQVYTSPDLKTVKLRGHSHATNEHYYVKSDGVWKFAGLKPEVRWNEHKFEEVFKGSYTQSEKHS</sequence>
<name>ARP1_METAQ</name>
<accession>E9EHG0</accession>
<reference key="1">
    <citation type="journal article" date="2011" name="PLoS Genet.">
        <title>Genome sequencing and comparative transcriptomics of the model entomopathogenic fungi Metarhizium anisopliae and M. acridum.</title>
        <authorList>
            <person name="Gao Q."/>
            <person name="Jin K."/>
            <person name="Ying S.-H."/>
            <person name="Zhang Y."/>
            <person name="Xiao G."/>
            <person name="Shang Y."/>
            <person name="Duan Z."/>
            <person name="Hu X."/>
            <person name="Xie X.-Q."/>
            <person name="Zhou G."/>
            <person name="Peng G."/>
            <person name="Luo Z."/>
            <person name="Huang W."/>
            <person name="Wang B."/>
            <person name="Fang W."/>
            <person name="Wang S."/>
            <person name="Zhong Y."/>
            <person name="Ma L.-J."/>
            <person name="St Leger R.J."/>
            <person name="Zhao G.-P."/>
            <person name="Pei Y."/>
            <person name="Feng M.-G."/>
            <person name="Xia Y."/>
            <person name="Wang C."/>
        </authorList>
    </citation>
    <scope>NUCLEOTIDE SEQUENCE [LARGE SCALE GENOMIC DNA]</scope>
    <source>
        <strain>CQMa 102</strain>
    </source>
</reference>
<reference key="2">
    <citation type="journal article" date="2018" name="PLoS Genet.">
        <title>Duplication of a Pks gene cluster and subsequent functional diversification facilitate environmental adaptation in Metarhizium species.</title>
        <authorList>
            <person name="Zeng G."/>
            <person name="Zhang P."/>
            <person name="Zhang Q."/>
            <person name="Zhao H."/>
            <person name="Li Z."/>
            <person name="Zhang X."/>
            <person name="Wang C."/>
            <person name="Yin W.B."/>
            <person name="Fang W."/>
        </authorList>
    </citation>
    <scope>IDENTIFICATION</scope>
    <scope>FUNCTION</scope>
</reference>
<evidence type="ECO:0000250" key="1">
    <source>
        <dbReference type="UniProtKB" id="P56221"/>
    </source>
</evidence>
<evidence type="ECO:0000269" key="2">
    <source>
    </source>
</evidence>
<evidence type="ECO:0000303" key="3">
    <source>
    </source>
</evidence>
<evidence type="ECO:0000305" key="4"/>
<evidence type="ECO:0000305" key="5">
    <source>
    </source>
</evidence>
<protein>
    <recommendedName>
        <fullName evidence="5">Scytalone dehydratase-like protein Arp1</fullName>
        <ecNumber evidence="5">4.2.1.-</ecNumber>
    </recommendedName>
</protein>
<keyword id="KW-0456">Lyase</keyword>
<keyword id="KW-1185">Reference proteome</keyword>
<feature type="chain" id="PRO_0000445914" description="Scytalone dehydratase-like protein Arp1">
    <location>
        <begin position="1"/>
        <end position="446"/>
    </location>
</feature>
<feature type="active site" evidence="1">
    <location>
        <position position="358"/>
    </location>
</feature>
<feature type="active site" evidence="1">
    <location>
        <position position="383"/>
    </location>
</feature>
<feature type="binding site" evidence="1">
    <location>
        <position position="323"/>
    </location>
    <ligand>
        <name>substrate</name>
    </ligand>
</feature>
<feature type="binding site" evidence="1">
    <location>
        <position position="404"/>
    </location>
    <ligand>
        <name>substrate</name>
    </ligand>
</feature>
<comment type="function">
    <text evidence="2">Scytalone dehydratase-like protein; part of the Pks2 gene cluster that mediates the formation of infectious structures (appressoria), enabling these fungi to kill insects faster (PubMed:29958281). The product of the Pks2 gene cluster is different from the one of Pks1 and has still not been identified (PubMed:29958281).</text>
</comment>
<comment type="subunit">
    <text evidence="1">Homotrimer. Each subunit contains an active site, located in the central part of the hydrophobic core of the monomer, which functions independently.</text>
</comment>
<comment type="similarity">
    <text evidence="4">Belongs to the scytalone dehydratase family.</text>
</comment>